<reference key="1">
    <citation type="journal article" date="2002" name="Nature">
        <title>Comparison of the genomes of two Xanthomonas pathogens with differing host specificities.</title>
        <authorList>
            <person name="da Silva A.C.R."/>
            <person name="Ferro J.A."/>
            <person name="Reinach F.C."/>
            <person name="Farah C.S."/>
            <person name="Furlan L.R."/>
            <person name="Quaggio R.B."/>
            <person name="Monteiro-Vitorello C.B."/>
            <person name="Van Sluys M.A."/>
            <person name="Almeida N.F. Jr."/>
            <person name="Alves L.M.C."/>
            <person name="do Amaral A.M."/>
            <person name="Bertolini M.C."/>
            <person name="Camargo L.E.A."/>
            <person name="Camarotte G."/>
            <person name="Cannavan F."/>
            <person name="Cardozo J."/>
            <person name="Chambergo F."/>
            <person name="Ciapina L.P."/>
            <person name="Cicarelli R.M.B."/>
            <person name="Coutinho L.L."/>
            <person name="Cursino-Santos J.R."/>
            <person name="El-Dorry H."/>
            <person name="Faria J.B."/>
            <person name="Ferreira A.J.S."/>
            <person name="Ferreira R.C.C."/>
            <person name="Ferro M.I.T."/>
            <person name="Formighieri E.F."/>
            <person name="Franco M.C."/>
            <person name="Greggio C.C."/>
            <person name="Gruber A."/>
            <person name="Katsuyama A.M."/>
            <person name="Kishi L.T."/>
            <person name="Leite R.P."/>
            <person name="Lemos E.G.M."/>
            <person name="Lemos M.V.F."/>
            <person name="Locali E.C."/>
            <person name="Machado M.A."/>
            <person name="Madeira A.M.B.N."/>
            <person name="Martinez-Rossi N.M."/>
            <person name="Martins E.C."/>
            <person name="Meidanis J."/>
            <person name="Menck C.F.M."/>
            <person name="Miyaki C.Y."/>
            <person name="Moon D.H."/>
            <person name="Moreira L.M."/>
            <person name="Novo M.T.M."/>
            <person name="Okura V.K."/>
            <person name="Oliveira M.C."/>
            <person name="Oliveira V.R."/>
            <person name="Pereira H.A."/>
            <person name="Rossi A."/>
            <person name="Sena J.A.D."/>
            <person name="Silva C."/>
            <person name="de Souza R.F."/>
            <person name="Spinola L.A.F."/>
            <person name="Takita M.A."/>
            <person name="Tamura R.E."/>
            <person name="Teixeira E.C."/>
            <person name="Tezza R.I.D."/>
            <person name="Trindade dos Santos M."/>
            <person name="Truffi D."/>
            <person name="Tsai S.M."/>
            <person name="White F.F."/>
            <person name="Setubal J.C."/>
            <person name="Kitajima J.P."/>
        </authorList>
    </citation>
    <scope>NUCLEOTIDE SEQUENCE [LARGE SCALE GENOMIC DNA]</scope>
    <source>
        <strain>ATCC 33913 / DSM 3586 / NCPPB 528 / LMG 568 / P 25</strain>
    </source>
</reference>
<accession>P58943</accession>
<sequence>MPKRTDLKTILIIGAGPIVIGQACEFDYSGAQACKALRDEGYRVVLVNSNPATIMTDPNMADAVYIEPINWQTVEKIIAKEKPDALLPTMGGQTALNCALDLADHGVLEKYNVELIGAKREAIRMAEDRELFRVAMGEIGLDCPRAEVAHTLEEALDIQTRVGYPTIIRPSFTLGGSGGGIAYNREELIDIVGRGLELSPTTEVLVEESVLGWKEFEMEVVRDTADNCIIVCAIENLDPMGVHTGDSITVAPAQTLTDKEYQRLRDASIAVLRKIGVDTGGSNVQFGISPTTGRVVVIEMNPRVSRSSALASKATGFPIAKVAAKLAVGYTLDELKNEITGGLTPASFEPSIDYVVTKIPRFAFEKFPQADARLTTQMKSVGEVMAMGRTFQESLQKALRGLETGKIGLDPTGLDLGSEDDMAALKRELKAPGPERLFYVGDAFRAGMSVADVYALSFIDPWFLDQIEELISLEQQLADDGMAALDAPRLRLLKRAGFSDARLAELIGTNEEAVRTLRRALKVRPVYKRVDSCAAEFATSTAYLYSTYEDECEALPSNRDKIMILGGGPNRIGQGIEFDYCCVHAALALRDDGFETIMVNCNPETVSTDYDTSDRLYFEPLTLEDVLEIVELEQPKGVIVQYGGQTPLKLARALEANGVPVIGTSPDSIDLAEDRERFQQLVDKLGLKQPPNRIARNADEALVLAREIGYPLVVRPSYVLGGRAMEIVYGESDLARYVRDAVKVSNDSPVLLDRFLDNAVEVDVDIIADKDGNVLIGGVMEHIEEAGVHSGDSSCSLPPYSLSAETQAELRRQVVMLAEGLNVVGLMNTQFAVQVNDAGDDIVYLLEVNPRASRTVPFVSKATGMPLAKIAARCMAGKTLAEQGATKEIVPDYYSVKEAIFPFAKFQGVDPILGPEMRSTGEVMGVGRSFGAAFARAQEAGGIKAPPLGKAFVSVRDPDKQRVLPVAQALVERGFTLVATRGTGAWLQQHGLSCEIVNKVAEGRPHIVDSIKNGEIVYIVNTTEGRAAISDSFSIRREALQHRVTYSTTVAGAKALVHSLEFRGTGPVWSLQELHKELEA</sequence>
<evidence type="ECO:0000255" key="1">
    <source>
        <dbReference type="HAMAP-Rule" id="MF_01210"/>
    </source>
</evidence>
<comment type="function">
    <text evidence="1">Large subunit of the glutamine-dependent carbamoyl phosphate synthetase (CPSase). CPSase catalyzes the formation of carbamoyl phosphate from the ammonia moiety of glutamine, carbonate, and phosphate donated by ATP, constituting the first step of 2 biosynthetic pathways, one leading to arginine and/or urea and the other to pyrimidine nucleotides. The large subunit (synthetase) binds the substrates ammonia (free or transferred from glutamine from the small subunit), hydrogencarbonate and ATP and carries out an ATP-coupled ligase reaction, activating hydrogencarbonate by forming carboxy phosphate which reacts with ammonia to form carbamoyl phosphate.</text>
</comment>
<comment type="catalytic activity">
    <reaction evidence="1">
        <text>hydrogencarbonate + L-glutamine + 2 ATP + H2O = carbamoyl phosphate + L-glutamate + 2 ADP + phosphate + 2 H(+)</text>
        <dbReference type="Rhea" id="RHEA:18633"/>
        <dbReference type="ChEBI" id="CHEBI:15377"/>
        <dbReference type="ChEBI" id="CHEBI:15378"/>
        <dbReference type="ChEBI" id="CHEBI:17544"/>
        <dbReference type="ChEBI" id="CHEBI:29985"/>
        <dbReference type="ChEBI" id="CHEBI:30616"/>
        <dbReference type="ChEBI" id="CHEBI:43474"/>
        <dbReference type="ChEBI" id="CHEBI:58228"/>
        <dbReference type="ChEBI" id="CHEBI:58359"/>
        <dbReference type="ChEBI" id="CHEBI:456216"/>
        <dbReference type="EC" id="6.3.5.5"/>
    </reaction>
</comment>
<comment type="catalytic activity">
    <molecule>Carbamoyl phosphate synthase large chain</molecule>
    <reaction evidence="1">
        <text>hydrogencarbonate + NH4(+) + 2 ATP = carbamoyl phosphate + 2 ADP + phosphate + 2 H(+)</text>
        <dbReference type="Rhea" id="RHEA:18029"/>
        <dbReference type="ChEBI" id="CHEBI:15378"/>
        <dbReference type="ChEBI" id="CHEBI:17544"/>
        <dbReference type="ChEBI" id="CHEBI:28938"/>
        <dbReference type="ChEBI" id="CHEBI:30616"/>
        <dbReference type="ChEBI" id="CHEBI:43474"/>
        <dbReference type="ChEBI" id="CHEBI:58228"/>
        <dbReference type="ChEBI" id="CHEBI:456216"/>
        <dbReference type="EC" id="6.3.4.16"/>
    </reaction>
</comment>
<comment type="cofactor">
    <cofactor evidence="1">
        <name>Mg(2+)</name>
        <dbReference type="ChEBI" id="CHEBI:18420"/>
    </cofactor>
    <cofactor evidence="1">
        <name>Mn(2+)</name>
        <dbReference type="ChEBI" id="CHEBI:29035"/>
    </cofactor>
    <text evidence="1">Binds 4 Mg(2+) or Mn(2+) ions per subunit.</text>
</comment>
<comment type="pathway">
    <text evidence="1">Amino-acid biosynthesis; L-arginine biosynthesis; carbamoyl phosphate from bicarbonate: step 1/1.</text>
</comment>
<comment type="pathway">
    <text evidence="1">Pyrimidine metabolism; UMP biosynthesis via de novo pathway; (S)-dihydroorotate from bicarbonate: step 1/3.</text>
</comment>
<comment type="subunit">
    <text evidence="1">Composed of two chains; the small (or glutamine) chain promotes the hydrolysis of glutamine to ammonia, which is used by the large (or ammonia) chain to synthesize carbamoyl phosphate. Tetramer of heterodimers (alpha,beta)4.</text>
</comment>
<comment type="domain">
    <text evidence="1">The large subunit is composed of 2 ATP-grasp domains that are involved in binding the 2 ATP molecules needed for carbamoyl phosphate synthesis. The N-terminal ATP-grasp domain (referred to as the carboxyphosphate synthetic component) catalyzes the ATP-dependent phosphorylation of hydrogencarbonate to carboxyphosphate and the subsequent nucleophilic attack by ammonia to form a carbamate intermediate. The C-terminal ATP-grasp domain (referred to as the carbamoyl phosphate synthetic component) then catalyzes the phosphorylation of carbamate with the second ATP to form the end product carbamoyl phosphate. The reactive and unstable enzyme intermediates are sequentially channeled from one active site to the next through the interior of the protein over a distance of at least 96 A.</text>
</comment>
<comment type="similarity">
    <text evidence="1">Belongs to the CarB family.</text>
</comment>
<feature type="chain" id="PRO_0000145066" description="Carbamoyl phosphate synthase large chain">
    <location>
        <begin position="1"/>
        <end position="1080"/>
    </location>
</feature>
<feature type="domain" description="ATP-grasp 1" evidence="1">
    <location>
        <begin position="133"/>
        <end position="328"/>
    </location>
</feature>
<feature type="domain" description="ATP-grasp 2" evidence="1">
    <location>
        <begin position="679"/>
        <end position="876"/>
    </location>
</feature>
<feature type="domain" description="MGS-like" evidence="1">
    <location>
        <begin position="943"/>
        <end position="1080"/>
    </location>
</feature>
<feature type="region of interest" description="Carboxyphosphate synthetic domain" evidence="1">
    <location>
        <begin position="1"/>
        <end position="403"/>
    </location>
</feature>
<feature type="region of interest" description="Oligomerization domain" evidence="1">
    <location>
        <begin position="404"/>
        <end position="554"/>
    </location>
</feature>
<feature type="region of interest" description="Carbamoyl phosphate synthetic domain" evidence="1">
    <location>
        <begin position="555"/>
        <end position="942"/>
    </location>
</feature>
<feature type="region of interest" description="Allosteric domain" evidence="1">
    <location>
        <begin position="943"/>
        <end position="1080"/>
    </location>
</feature>
<feature type="binding site" evidence="1">
    <location>
        <position position="129"/>
    </location>
    <ligand>
        <name>ATP</name>
        <dbReference type="ChEBI" id="CHEBI:30616"/>
        <label>1</label>
    </ligand>
</feature>
<feature type="binding site" evidence="1">
    <location>
        <position position="169"/>
    </location>
    <ligand>
        <name>ATP</name>
        <dbReference type="ChEBI" id="CHEBI:30616"/>
        <label>1</label>
    </ligand>
</feature>
<feature type="binding site" evidence="1">
    <location>
        <position position="175"/>
    </location>
    <ligand>
        <name>ATP</name>
        <dbReference type="ChEBI" id="CHEBI:30616"/>
        <label>1</label>
    </ligand>
</feature>
<feature type="binding site" evidence="1">
    <location>
        <position position="176"/>
    </location>
    <ligand>
        <name>ATP</name>
        <dbReference type="ChEBI" id="CHEBI:30616"/>
        <label>1</label>
    </ligand>
</feature>
<feature type="binding site" evidence="1">
    <location>
        <position position="208"/>
    </location>
    <ligand>
        <name>ATP</name>
        <dbReference type="ChEBI" id="CHEBI:30616"/>
        <label>1</label>
    </ligand>
</feature>
<feature type="binding site" evidence="1">
    <location>
        <position position="210"/>
    </location>
    <ligand>
        <name>ATP</name>
        <dbReference type="ChEBI" id="CHEBI:30616"/>
        <label>1</label>
    </ligand>
</feature>
<feature type="binding site" evidence="1">
    <location>
        <position position="215"/>
    </location>
    <ligand>
        <name>ATP</name>
        <dbReference type="ChEBI" id="CHEBI:30616"/>
        <label>1</label>
    </ligand>
</feature>
<feature type="binding site" evidence="1">
    <location>
        <position position="241"/>
    </location>
    <ligand>
        <name>ATP</name>
        <dbReference type="ChEBI" id="CHEBI:30616"/>
        <label>1</label>
    </ligand>
</feature>
<feature type="binding site" evidence="1">
    <location>
        <position position="242"/>
    </location>
    <ligand>
        <name>ATP</name>
        <dbReference type="ChEBI" id="CHEBI:30616"/>
        <label>1</label>
    </ligand>
</feature>
<feature type="binding site" evidence="1">
    <location>
        <position position="243"/>
    </location>
    <ligand>
        <name>ATP</name>
        <dbReference type="ChEBI" id="CHEBI:30616"/>
        <label>1</label>
    </ligand>
</feature>
<feature type="binding site" evidence="1">
    <location>
        <position position="285"/>
    </location>
    <ligand>
        <name>ATP</name>
        <dbReference type="ChEBI" id="CHEBI:30616"/>
        <label>1</label>
    </ligand>
</feature>
<feature type="binding site" evidence="1">
    <location>
        <position position="285"/>
    </location>
    <ligand>
        <name>Mg(2+)</name>
        <dbReference type="ChEBI" id="CHEBI:18420"/>
        <label>1</label>
    </ligand>
</feature>
<feature type="binding site" evidence="1">
    <location>
        <position position="285"/>
    </location>
    <ligand>
        <name>Mn(2+)</name>
        <dbReference type="ChEBI" id="CHEBI:29035"/>
        <label>1</label>
    </ligand>
</feature>
<feature type="binding site" evidence="1">
    <location>
        <position position="299"/>
    </location>
    <ligand>
        <name>ATP</name>
        <dbReference type="ChEBI" id="CHEBI:30616"/>
        <label>1</label>
    </ligand>
</feature>
<feature type="binding site" evidence="1">
    <location>
        <position position="299"/>
    </location>
    <ligand>
        <name>Mg(2+)</name>
        <dbReference type="ChEBI" id="CHEBI:18420"/>
        <label>1</label>
    </ligand>
</feature>
<feature type="binding site" evidence="1">
    <location>
        <position position="299"/>
    </location>
    <ligand>
        <name>Mg(2+)</name>
        <dbReference type="ChEBI" id="CHEBI:18420"/>
        <label>2</label>
    </ligand>
</feature>
<feature type="binding site" evidence="1">
    <location>
        <position position="299"/>
    </location>
    <ligand>
        <name>Mn(2+)</name>
        <dbReference type="ChEBI" id="CHEBI:29035"/>
        <label>1</label>
    </ligand>
</feature>
<feature type="binding site" evidence="1">
    <location>
        <position position="299"/>
    </location>
    <ligand>
        <name>Mn(2+)</name>
        <dbReference type="ChEBI" id="CHEBI:29035"/>
        <label>2</label>
    </ligand>
</feature>
<feature type="binding site" evidence="1">
    <location>
        <position position="301"/>
    </location>
    <ligand>
        <name>Mg(2+)</name>
        <dbReference type="ChEBI" id="CHEBI:18420"/>
        <label>2</label>
    </ligand>
</feature>
<feature type="binding site" evidence="1">
    <location>
        <position position="301"/>
    </location>
    <ligand>
        <name>Mn(2+)</name>
        <dbReference type="ChEBI" id="CHEBI:29035"/>
        <label>2</label>
    </ligand>
</feature>
<feature type="binding site" evidence="1">
    <location>
        <position position="715"/>
    </location>
    <ligand>
        <name>ATP</name>
        <dbReference type="ChEBI" id="CHEBI:30616"/>
        <label>2</label>
    </ligand>
</feature>
<feature type="binding site" evidence="1">
    <location>
        <position position="754"/>
    </location>
    <ligand>
        <name>ATP</name>
        <dbReference type="ChEBI" id="CHEBI:30616"/>
        <label>2</label>
    </ligand>
</feature>
<feature type="binding site" evidence="1">
    <location>
        <position position="756"/>
    </location>
    <ligand>
        <name>ATP</name>
        <dbReference type="ChEBI" id="CHEBI:30616"/>
        <label>2</label>
    </ligand>
</feature>
<feature type="binding site" evidence="1">
    <location>
        <position position="761"/>
    </location>
    <ligand>
        <name>ATP</name>
        <dbReference type="ChEBI" id="CHEBI:30616"/>
        <label>2</label>
    </ligand>
</feature>
<feature type="binding site" evidence="1">
    <location>
        <position position="787"/>
    </location>
    <ligand>
        <name>ATP</name>
        <dbReference type="ChEBI" id="CHEBI:30616"/>
        <label>2</label>
    </ligand>
</feature>
<feature type="binding site" evidence="1">
    <location>
        <position position="788"/>
    </location>
    <ligand>
        <name>ATP</name>
        <dbReference type="ChEBI" id="CHEBI:30616"/>
        <label>2</label>
    </ligand>
</feature>
<feature type="binding site" evidence="1">
    <location>
        <position position="789"/>
    </location>
    <ligand>
        <name>ATP</name>
        <dbReference type="ChEBI" id="CHEBI:30616"/>
        <label>2</label>
    </ligand>
</feature>
<feature type="binding site" evidence="1">
    <location>
        <position position="790"/>
    </location>
    <ligand>
        <name>ATP</name>
        <dbReference type="ChEBI" id="CHEBI:30616"/>
        <label>2</label>
    </ligand>
</feature>
<feature type="binding site" evidence="1">
    <location>
        <position position="830"/>
    </location>
    <ligand>
        <name>ATP</name>
        <dbReference type="ChEBI" id="CHEBI:30616"/>
        <label>2</label>
    </ligand>
</feature>
<feature type="binding site" evidence="1">
    <location>
        <position position="830"/>
    </location>
    <ligand>
        <name>Mg(2+)</name>
        <dbReference type="ChEBI" id="CHEBI:18420"/>
        <label>3</label>
    </ligand>
</feature>
<feature type="binding site" evidence="1">
    <location>
        <position position="830"/>
    </location>
    <ligand>
        <name>Mn(2+)</name>
        <dbReference type="ChEBI" id="CHEBI:29035"/>
        <label>3</label>
    </ligand>
</feature>
<feature type="binding site" evidence="1">
    <location>
        <position position="847"/>
    </location>
    <ligand>
        <name>ATP</name>
        <dbReference type="ChEBI" id="CHEBI:30616"/>
        <label>2</label>
    </ligand>
</feature>
<feature type="binding site" evidence="1">
    <location>
        <position position="847"/>
    </location>
    <ligand>
        <name>Mg(2+)</name>
        <dbReference type="ChEBI" id="CHEBI:18420"/>
        <label>3</label>
    </ligand>
</feature>
<feature type="binding site" evidence="1">
    <location>
        <position position="847"/>
    </location>
    <ligand>
        <name>Mg(2+)</name>
        <dbReference type="ChEBI" id="CHEBI:18420"/>
        <label>4</label>
    </ligand>
</feature>
<feature type="binding site" evidence="1">
    <location>
        <position position="847"/>
    </location>
    <ligand>
        <name>Mn(2+)</name>
        <dbReference type="ChEBI" id="CHEBI:29035"/>
        <label>3</label>
    </ligand>
</feature>
<feature type="binding site" evidence="1">
    <location>
        <position position="847"/>
    </location>
    <ligand>
        <name>Mn(2+)</name>
        <dbReference type="ChEBI" id="CHEBI:29035"/>
        <label>4</label>
    </ligand>
</feature>
<feature type="binding site" evidence="1">
    <location>
        <position position="849"/>
    </location>
    <ligand>
        <name>Mg(2+)</name>
        <dbReference type="ChEBI" id="CHEBI:18420"/>
        <label>4</label>
    </ligand>
</feature>
<feature type="binding site" evidence="1">
    <location>
        <position position="849"/>
    </location>
    <ligand>
        <name>Mn(2+)</name>
        <dbReference type="ChEBI" id="CHEBI:29035"/>
        <label>4</label>
    </ligand>
</feature>
<protein>
    <recommendedName>
        <fullName evidence="1">Carbamoyl phosphate synthase large chain</fullName>
        <ecNumber evidence="1">6.3.4.16</ecNumber>
        <ecNumber evidence="1">6.3.5.5</ecNumber>
    </recommendedName>
    <alternativeName>
        <fullName evidence="1">Carbamoyl phosphate synthetase ammonia chain</fullName>
    </alternativeName>
</protein>
<gene>
    <name evidence="1" type="primary">carB</name>
    <name type="ordered locus">XCC1843</name>
</gene>
<organism>
    <name type="scientific">Xanthomonas campestris pv. campestris (strain ATCC 33913 / DSM 3586 / NCPPB 528 / LMG 568 / P 25)</name>
    <dbReference type="NCBI Taxonomy" id="190485"/>
    <lineage>
        <taxon>Bacteria</taxon>
        <taxon>Pseudomonadati</taxon>
        <taxon>Pseudomonadota</taxon>
        <taxon>Gammaproteobacteria</taxon>
        <taxon>Lysobacterales</taxon>
        <taxon>Lysobacteraceae</taxon>
        <taxon>Xanthomonas</taxon>
    </lineage>
</organism>
<name>CARB_XANCP</name>
<proteinExistence type="inferred from homology"/>
<dbReference type="EC" id="6.3.4.16" evidence="1"/>
<dbReference type="EC" id="6.3.5.5" evidence="1"/>
<dbReference type="EMBL" id="AE008922">
    <property type="protein sequence ID" value="AAM41132.1"/>
    <property type="molecule type" value="Genomic_DNA"/>
</dbReference>
<dbReference type="RefSeq" id="NP_637208.1">
    <property type="nucleotide sequence ID" value="NC_003902.1"/>
</dbReference>
<dbReference type="RefSeq" id="WP_011037013.1">
    <property type="nucleotide sequence ID" value="NC_003902.1"/>
</dbReference>
<dbReference type="SMR" id="P58943"/>
<dbReference type="STRING" id="190485.XCC1843"/>
<dbReference type="EnsemblBacteria" id="AAM41132">
    <property type="protein sequence ID" value="AAM41132"/>
    <property type="gene ID" value="XCC1843"/>
</dbReference>
<dbReference type="KEGG" id="xcc:XCC1843"/>
<dbReference type="PATRIC" id="fig|190485.4.peg.1967"/>
<dbReference type="eggNOG" id="COG0458">
    <property type="taxonomic scope" value="Bacteria"/>
</dbReference>
<dbReference type="HOGENOM" id="CLU_000513_1_0_6"/>
<dbReference type="OrthoDB" id="9804197at2"/>
<dbReference type="UniPathway" id="UPA00068">
    <property type="reaction ID" value="UER00171"/>
</dbReference>
<dbReference type="UniPathway" id="UPA00070">
    <property type="reaction ID" value="UER00115"/>
</dbReference>
<dbReference type="Proteomes" id="UP000001010">
    <property type="component" value="Chromosome"/>
</dbReference>
<dbReference type="GO" id="GO:0005737">
    <property type="term" value="C:cytoplasm"/>
    <property type="evidence" value="ECO:0000318"/>
    <property type="project" value="GO_Central"/>
</dbReference>
<dbReference type="GO" id="GO:0005524">
    <property type="term" value="F:ATP binding"/>
    <property type="evidence" value="ECO:0007669"/>
    <property type="project" value="UniProtKB-UniRule"/>
</dbReference>
<dbReference type="GO" id="GO:0004087">
    <property type="term" value="F:carbamoyl-phosphate synthase (ammonia) activity"/>
    <property type="evidence" value="ECO:0007669"/>
    <property type="project" value="RHEA"/>
</dbReference>
<dbReference type="GO" id="GO:0004088">
    <property type="term" value="F:carbamoyl-phosphate synthase (glutamine-hydrolyzing) activity"/>
    <property type="evidence" value="ECO:0007669"/>
    <property type="project" value="UniProtKB-UniRule"/>
</dbReference>
<dbReference type="GO" id="GO:0046872">
    <property type="term" value="F:metal ion binding"/>
    <property type="evidence" value="ECO:0007669"/>
    <property type="project" value="UniProtKB-KW"/>
</dbReference>
<dbReference type="GO" id="GO:0044205">
    <property type="term" value="P:'de novo' UMP biosynthetic process"/>
    <property type="evidence" value="ECO:0007669"/>
    <property type="project" value="UniProtKB-UniRule"/>
</dbReference>
<dbReference type="GO" id="GO:0006541">
    <property type="term" value="P:glutamine metabolic process"/>
    <property type="evidence" value="ECO:0000318"/>
    <property type="project" value="GO_Central"/>
</dbReference>
<dbReference type="GO" id="GO:0006526">
    <property type="term" value="P:L-arginine biosynthetic process"/>
    <property type="evidence" value="ECO:0007669"/>
    <property type="project" value="UniProtKB-UniRule"/>
</dbReference>
<dbReference type="CDD" id="cd01424">
    <property type="entry name" value="MGS_CPS_II"/>
    <property type="match status" value="1"/>
</dbReference>
<dbReference type="FunFam" id="1.10.1030.10:FF:000002">
    <property type="entry name" value="Carbamoyl-phosphate synthase large chain"/>
    <property type="match status" value="1"/>
</dbReference>
<dbReference type="FunFam" id="3.30.1490.20:FF:000001">
    <property type="entry name" value="Carbamoyl-phosphate synthase large chain"/>
    <property type="match status" value="1"/>
</dbReference>
<dbReference type="FunFam" id="3.30.470.20:FF:000007">
    <property type="entry name" value="Carbamoyl-phosphate synthase large chain"/>
    <property type="match status" value="1"/>
</dbReference>
<dbReference type="FunFam" id="3.30.470.20:FF:000013">
    <property type="entry name" value="Carbamoyl-phosphate synthase large chain"/>
    <property type="match status" value="1"/>
</dbReference>
<dbReference type="FunFam" id="3.40.50.20:FF:000001">
    <property type="entry name" value="Carbamoyl-phosphate synthase large chain"/>
    <property type="match status" value="1"/>
</dbReference>
<dbReference type="FunFam" id="3.40.50.20:FF:000003">
    <property type="entry name" value="Carbamoyl-phosphate synthase large chain"/>
    <property type="match status" value="1"/>
</dbReference>
<dbReference type="Gene3D" id="3.40.50.20">
    <property type="match status" value="2"/>
</dbReference>
<dbReference type="Gene3D" id="3.30.470.20">
    <property type="entry name" value="ATP-grasp fold, B domain"/>
    <property type="match status" value="2"/>
</dbReference>
<dbReference type="Gene3D" id="1.10.1030.10">
    <property type="entry name" value="Carbamoyl-phosphate synthetase, large subunit oligomerisation domain"/>
    <property type="match status" value="1"/>
</dbReference>
<dbReference type="Gene3D" id="3.40.50.1380">
    <property type="entry name" value="Methylglyoxal synthase-like domain"/>
    <property type="match status" value="1"/>
</dbReference>
<dbReference type="HAMAP" id="MF_01210_A">
    <property type="entry name" value="CPSase_L_chain_A"/>
    <property type="match status" value="1"/>
</dbReference>
<dbReference type="HAMAP" id="MF_01210_B">
    <property type="entry name" value="CPSase_L_chain_B"/>
    <property type="match status" value="1"/>
</dbReference>
<dbReference type="InterPro" id="IPR006195">
    <property type="entry name" value="aa-tRNA-synth_II"/>
</dbReference>
<dbReference type="InterPro" id="IPR011761">
    <property type="entry name" value="ATP-grasp"/>
</dbReference>
<dbReference type="InterPro" id="IPR006275">
    <property type="entry name" value="CarbamoylP_synth_lsu"/>
</dbReference>
<dbReference type="InterPro" id="IPR005480">
    <property type="entry name" value="CarbamoylP_synth_lsu_oligo"/>
</dbReference>
<dbReference type="InterPro" id="IPR036897">
    <property type="entry name" value="CarbamoylP_synth_lsu_oligo_sf"/>
</dbReference>
<dbReference type="InterPro" id="IPR005479">
    <property type="entry name" value="CbamoylP_synth_lsu-like_ATP-bd"/>
</dbReference>
<dbReference type="InterPro" id="IPR005483">
    <property type="entry name" value="CbamoylP_synth_lsu_CPSase_dom"/>
</dbReference>
<dbReference type="InterPro" id="IPR011607">
    <property type="entry name" value="MGS-like_dom"/>
</dbReference>
<dbReference type="InterPro" id="IPR036914">
    <property type="entry name" value="MGS-like_dom_sf"/>
</dbReference>
<dbReference type="InterPro" id="IPR033937">
    <property type="entry name" value="MGS_CPS_CarB"/>
</dbReference>
<dbReference type="InterPro" id="IPR016185">
    <property type="entry name" value="PreATP-grasp_dom_sf"/>
</dbReference>
<dbReference type="NCBIfam" id="TIGR01369">
    <property type="entry name" value="CPSaseII_lrg"/>
    <property type="match status" value="1"/>
</dbReference>
<dbReference type="NCBIfam" id="NF003671">
    <property type="entry name" value="PRK05294.1"/>
    <property type="match status" value="1"/>
</dbReference>
<dbReference type="NCBIfam" id="NF009455">
    <property type="entry name" value="PRK12815.1"/>
    <property type="match status" value="1"/>
</dbReference>
<dbReference type="PANTHER" id="PTHR11405:SF53">
    <property type="entry name" value="CARBAMOYL-PHOSPHATE SYNTHASE [AMMONIA], MITOCHONDRIAL"/>
    <property type="match status" value="1"/>
</dbReference>
<dbReference type="PANTHER" id="PTHR11405">
    <property type="entry name" value="CARBAMOYLTRANSFERASE FAMILY MEMBER"/>
    <property type="match status" value="1"/>
</dbReference>
<dbReference type="Pfam" id="PF02786">
    <property type="entry name" value="CPSase_L_D2"/>
    <property type="match status" value="2"/>
</dbReference>
<dbReference type="Pfam" id="PF02787">
    <property type="entry name" value="CPSase_L_D3"/>
    <property type="match status" value="1"/>
</dbReference>
<dbReference type="Pfam" id="PF02142">
    <property type="entry name" value="MGS"/>
    <property type="match status" value="1"/>
</dbReference>
<dbReference type="PRINTS" id="PR00098">
    <property type="entry name" value="CPSASE"/>
</dbReference>
<dbReference type="SMART" id="SM01096">
    <property type="entry name" value="CPSase_L_D3"/>
    <property type="match status" value="1"/>
</dbReference>
<dbReference type="SMART" id="SM00851">
    <property type="entry name" value="MGS"/>
    <property type="match status" value="1"/>
</dbReference>
<dbReference type="SUPFAM" id="SSF48108">
    <property type="entry name" value="Carbamoyl phosphate synthetase, large subunit connection domain"/>
    <property type="match status" value="1"/>
</dbReference>
<dbReference type="SUPFAM" id="SSF56059">
    <property type="entry name" value="Glutathione synthetase ATP-binding domain-like"/>
    <property type="match status" value="2"/>
</dbReference>
<dbReference type="SUPFAM" id="SSF52335">
    <property type="entry name" value="Methylglyoxal synthase-like"/>
    <property type="match status" value="1"/>
</dbReference>
<dbReference type="SUPFAM" id="SSF52440">
    <property type="entry name" value="PreATP-grasp domain"/>
    <property type="match status" value="2"/>
</dbReference>
<dbReference type="PROSITE" id="PS50975">
    <property type="entry name" value="ATP_GRASP"/>
    <property type="match status" value="2"/>
</dbReference>
<dbReference type="PROSITE" id="PS00866">
    <property type="entry name" value="CPSASE_1"/>
    <property type="match status" value="1"/>
</dbReference>
<dbReference type="PROSITE" id="PS00867">
    <property type="entry name" value="CPSASE_2"/>
    <property type="match status" value="2"/>
</dbReference>
<dbReference type="PROSITE" id="PS51855">
    <property type="entry name" value="MGS"/>
    <property type="match status" value="1"/>
</dbReference>
<keyword id="KW-0028">Amino-acid biosynthesis</keyword>
<keyword id="KW-0055">Arginine biosynthesis</keyword>
<keyword id="KW-0067">ATP-binding</keyword>
<keyword id="KW-0436">Ligase</keyword>
<keyword id="KW-0460">Magnesium</keyword>
<keyword id="KW-0464">Manganese</keyword>
<keyword id="KW-0479">Metal-binding</keyword>
<keyword id="KW-0547">Nucleotide-binding</keyword>
<keyword id="KW-0665">Pyrimidine biosynthesis</keyword>
<keyword id="KW-1185">Reference proteome</keyword>
<keyword id="KW-0677">Repeat</keyword>